<name>APDP_SPHSE</name>
<feature type="peptide" id="PRO_0000441347" description="Apidaecin P" evidence="1">
    <location>
        <begin position="1"/>
        <end position="17"/>
    </location>
</feature>
<keyword id="KW-0044">Antibiotic</keyword>
<keyword id="KW-0929">Antimicrobial</keyword>
<keyword id="KW-0903">Direct protein sequencing</keyword>
<keyword id="KW-0391">Immunity</keyword>
<keyword id="KW-0399">Innate immunity</keyword>
<keyword id="KW-0964">Secreted</keyword>
<evidence type="ECO:0000269" key="1">
    <source>
    </source>
</evidence>
<evidence type="ECO:0000303" key="2">
    <source>
    </source>
</evidence>
<evidence type="ECO:0000305" key="3"/>
<comment type="function">
    <text evidence="1">Antimicrobial peptide active against many Gram-negative enterobacterial and plant-associated bacterial species. Not active against other bacterial species like H.pylori, P.mirabilis, B.pertussis or N.gonorrhoeae.</text>
</comment>
<comment type="subcellular location">
    <subcellularLocation>
        <location evidence="1">Secreted</location>
    </subcellularLocation>
</comment>
<comment type="induction">
    <text evidence="1">By bacterial infection.</text>
</comment>
<comment type="mass spectrometry"/>
<comment type="similarity">
    <text evidence="3">Belongs to the apidaecin family.</text>
</comment>
<protein>
    <recommendedName>
        <fullName evidence="2">Apidaecin P</fullName>
    </recommendedName>
</protein>
<sequence>NRPTYVPPPPRPPHPRL</sequence>
<organism evidence="2">
    <name type="scientific">Sphecius speciosus</name>
    <name type="common">Eastern cicada killer</name>
    <dbReference type="NCBI Taxonomy" id="7487"/>
    <lineage>
        <taxon>Eukaryota</taxon>
        <taxon>Metazoa</taxon>
        <taxon>Ecdysozoa</taxon>
        <taxon>Arthropoda</taxon>
        <taxon>Hexapoda</taxon>
        <taxon>Insecta</taxon>
        <taxon>Pterygota</taxon>
        <taxon>Neoptera</taxon>
        <taxon>Endopterygota</taxon>
        <taxon>Hymenoptera</taxon>
        <taxon>Apocrita</taxon>
        <taxon>Aculeata</taxon>
        <taxon>Apoidea</taxon>
        <taxon>Crabronidae</taxon>
        <taxon>Bembicinae</taxon>
        <taxon>Bembicini</taxon>
        <taxon>Handlirschiina</taxon>
        <taxon>Sphecius</taxon>
    </lineage>
</organism>
<accession>C0HKX7</accession>
<reference evidence="3" key="1">
    <citation type="journal article" date="1994" name="J. Biol. Chem.">
        <title>Biodiversity of apidaecin-type peptide antibiotics. Prospects of manipulating the antibacterial spectrum and combating acquired resistance.</title>
        <authorList>
            <person name="Casteels P."/>
            <person name="Romagnolo J."/>
            <person name="Castle M."/>
            <person name="Casteels-Josson K."/>
            <person name="Erdjument-Bromage H."/>
            <person name="Tempst P."/>
        </authorList>
    </citation>
    <scope>PROTEIN SEQUENCE</scope>
    <scope>FUNCTION</scope>
    <scope>SUBCELLULAR LOCATION</scope>
    <scope>INDUCTION</scope>
    <scope>MASS SPECTROMETRY</scope>
    <source>
        <tissue evidence="2">Hemolymph</tissue>
    </source>
</reference>
<dbReference type="GO" id="GO:0005615">
    <property type="term" value="C:extracellular space"/>
    <property type="evidence" value="ECO:0000314"/>
    <property type="project" value="UniProtKB"/>
</dbReference>
<dbReference type="GO" id="GO:0050829">
    <property type="term" value="P:defense response to Gram-negative bacterium"/>
    <property type="evidence" value="ECO:0000314"/>
    <property type="project" value="UniProtKB"/>
</dbReference>
<dbReference type="GO" id="GO:0045087">
    <property type="term" value="P:innate immune response"/>
    <property type="evidence" value="ECO:0007669"/>
    <property type="project" value="UniProtKB-KW"/>
</dbReference>
<proteinExistence type="evidence at protein level"/>